<evidence type="ECO:0000255" key="1">
    <source>
        <dbReference type="HAMAP-Rule" id="MF_00033"/>
    </source>
</evidence>
<organism>
    <name type="scientific">Lactobacillus gasseri (strain ATCC 33323 / DSM 20243 / BCRC 14619 / CIP 102991 / JCM 1131 / KCTC 3163 / NCIMB 11718 / NCTC 13722 / AM63)</name>
    <dbReference type="NCBI Taxonomy" id="324831"/>
    <lineage>
        <taxon>Bacteria</taxon>
        <taxon>Bacillati</taxon>
        <taxon>Bacillota</taxon>
        <taxon>Bacilli</taxon>
        <taxon>Lactobacillales</taxon>
        <taxon>Lactobacillaceae</taxon>
        <taxon>Lactobacillus</taxon>
    </lineage>
</organism>
<feature type="chain" id="PRO_1000002662" description="UDP-N-acetylglucosamine--N-acetylmuramyl-(pentapeptide) pyrophosphoryl-undecaprenol N-acetylglucosamine transferase">
    <location>
        <begin position="1"/>
        <end position="370"/>
    </location>
</feature>
<feature type="binding site" evidence="1">
    <location>
        <begin position="10"/>
        <end position="12"/>
    </location>
    <ligand>
        <name>UDP-N-acetyl-alpha-D-glucosamine</name>
        <dbReference type="ChEBI" id="CHEBI:57705"/>
    </ligand>
</feature>
<feature type="binding site" evidence="1">
    <location>
        <position position="126"/>
    </location>
    <ligand>
        <name>UDP-N-acetyl-alpha-D-glucosamine</name>
        <dbReference type="ChEBI" id="CHEBI:57705"/>
    </ligand>
</feature>
<feature type="binding site" evidence="1">
    <location>
        <position position="200"/>
    </location>
    <ligand>
        <name>UDP-N-acetyl-alpha-D-glucosamine</name>
        <dbReference type="ChEBI" id="CHEBI:57705"/>
    </ligand>
</feature>
<feature type="binding site" evidence="1">
    <location>
        <position position="255"/>
    </location>
    <ligand>
        <name>UDP-N-acetyl-alpha-D-glucosamine</name>
        <dbReference type="ChEBI" id="CHEBI:57705"/>
    </ligand>
</feature>
<feature type="binding site" evidence="1">
    <location>
        <position position="300"/>
    </location>
    <ligand>
        <name>UDP-N-acetyl-alpha-D-glucosamine</name>
        <dbReference type="ChEBI" id="CHEBI:57705"/>
    </ligand>
</feature>
<accession>Q042P9</accession>
<sequence length="370" mass="40528">MRVIFSGGGTGGHIYPIMALIERLKERKLVTNDEILFVGTDRGLESKIVPAAGVPFRTLKIKGFDRKHPLKNFETIELFIKATKEAKQIIKDFKPDVVVGTGGYVSGAIVYEAAKMHIPTIIHESNSVVGLANKFLAHYVDKICYTFDDAAKQFSEKKKLVKTGNPRSQQVLGLNKDNVDLAKKWGLNPNMPTVLIFGGSRGALAINQIVEKSLPELETKPYQVIWATGQLYYGDVKKKLAGKEISSNVKIVPYIDNMPGLLPQMTCVVARSGATSLAEFTALGVPVILIPSPNVTHNHQMKNAMDMEKAGAALVIAEDDLNPNNFVSSIDHILLDTNYAKQMSEASRRLGVPDASDQVISVMEGLIKNK</sequence>
<protein>
    <recommendedName>
        <fullName evidence="1">UDP-N-acetylglucosamine--N-acetylmuramyl-(pentapeptide) pyrophosphoryl-undecaprenol N-acetylglucosamine transferase</fullName>
        <ecNumber evidence="1">2.4.1.227</ecNumber>
    </recommendedName>
    <alternativeName>
        <fullName evidence="1">Undecaprenyl-PP-MurNAc-pentapeptide-UDPGlcNAc GlcNAc transferase</fullName>
    </alternativeName>
</protein>
<reference key="1">
    <citation type="journal article" date="2006" name="Proc. Natl. Acad. Sci. U.S.A.">
        <title>Comparative genomics of the lactic acid bacteria.</title>
        <authorList>
            <person name="Makarova K.S."/>
            <person name="Slesarev A."/>
            <person name="Wolf Y.I."/>
            <person name="Sorokin A."/>
            <person name="Mirkin B."/>
            <person name="Koonin E.V."/>
            <person name="Pavlov A."/>
            <person name="Pavlova N."/>
            <person name="Karamychev V."/>
            <person name="Polouchine N."/>
            <person name="Shakhova V."/>
            <person name="Grigoriev I."/>
            <person name="Lou Y."/>
            <person name="Rohksar D."/>
            <person name="Lucas S."/>
            <person name="Huang K."/>
            <person name="Goodstein D.M."/>
            <person name="Hawkins T."/>
            <person name="Plengvidhya V."/>
            <person name="Welker D."/>
            <person name="Hughes J."/>
            <person name="Goh Y."/>
            <person name="Benson A."/>
            <person name="Baldwin K."/>
            <person name="Lee J.-H."/>
            <person name="Diaz-Muniz I."/>
            <person name="Dosti B."/>
            <person name="Smeianov V."/>
            <person name="Wechter W."/>
            <person name="Barabote R."/>
            <person name="Lorca G."/>
            <person name="Altermann E."/>
            <person name="Barrangou R."/>
            <person name="Ganesan B."/>
            <person name="Xie Y."/>
            <person name="Rawsthorne H."/>
            <person name="Tamir D."/>
            <person name="Parker C."/>
            <person name="Breidt F."/>
            <person name="Broadbent J.R."/>
            <person name="Hutkins R."/>
            <person name="O'Sullivan D."/>
            <person name="Steele J."/>
            <person name="Unlu G."/>
            <person name="Saier M.H. Jr."/>
            <person name="Klaenhammer T."/>
            <person name="Richardson P."/>
            <person name="Kozyavkin S."/>
            <person name="Weimer B.C."/>
            <person name="Mills D.A."/>
        </authorList>
    </citation>
    <scope>NUCLEOTIDE SEQUENCE [LARGE SCALE GENOMIC DNA]</scope>
    <source>
        <strain>ATCC 33323 / DSM 20243 / BCRC 14619 / CIP 102991 / JCM 1131 / KCTC 3163 / NCIMB 11718 / NCTC 13722 / AM63</strain>
    </source>
</reference>
<comment type="function">
    <text evidence="1">Cell wall formation. Catalyzes the transfer of a GlcNAc subunit on undecaprenyl-pyrophosphoryl-MurNAc-pentapeptide (lipid intermediate I) to form undecaprenyl-pyrophosphoryl-MurNAc-(pentapeptide)GlcNAc (lipid intermediate II).</text>
</comment>
<comment type="catalytic activity">
    <reaction evidence="1">
        <text>Mur2Ac(oyl-L-Ala-gamma-D-Glu-L-Lys-D-Ala-D-Ala)-di-trans,octa-cis-undecaprenyl diphosphate + UDP-N-acetyl-alpha-D-glucosamine = beta-D-GlcNAc-(1-&gt;4)-Mur2Ac(oyl-L-Ala-gamma-D-Glu-L-Lys-D-Ala-D-Ala)-di-trans,octa-cis-undecaprenyl diphosphate + UDP + H(+)</text>
        <dbReference type="Rhea" id="RHEA:23192"/>
        <dbReference type="ChEBI" id="CHEBI:15378"/>
        <dbReference type="ChEBI" id="CHEBI:57705"/>
        <dbReference type="ChEBI" id="CHEBI:58223"/>
        <dbReference type="ChEBI" id="CHEBI:60032"/>
        <dbReference type="ChEBI" id="CHEBI:60033"/>
        <dbReference type="EC" id="2.4.1.227"/>
    </reaction>
</comment>
<comment type="pathway">
    <text evidence="1">Cell wall biogenesis; peptidoglycan biosynthesis.</text>
</comment>
<comment type="subcellular location">
    <subcellularLocation>
        <location evidence="1">Cell membrane</location>
        <topology evidence="1">Peripheral membrane protein</topology>
        <orientation evidence="1">Cytoplasmic side</orientation>
    </subcellularLocation>
</comment>
<comment type="similarity">
    <text evidence="1">Belongs to the glycosyltransferase 28 family. MurG subfamily.</text>
</comment>
<proteinExistence type="inferred from homology"/>
<gene>
    <name evidence="1" type="primary">murG</name>
    <name type="ordered locus">LGAS_1204</name>
</gene>
<dbReference type="EC" id="2.4.1.227" evidence="1"/>
<dbReference type="EMBL" id="CP000413">
    <property type="protein sequence ID" value="ABJ60573.1"/>
    <property type="molecule type" value="Genomic_DNA"/>
</dbReference>
<dbReference type="RefSeq" id="WP_003647102.1">
    <property type="nucleotide sequence ID" value="NZ_WBMG01000002.1"/>
</dbReference>
<dbReference type="SMR" id="Q042P9"/>
<dbReference type="CAZy" id="GT28">
    <property type="family name" value="Glycosyltransferase Family 28"/>
</dbReference>
<dbReference type="GeneID" id="29639487"/>
<dbReference type="KEGG" id="lga:LGAS_1204"/>
<dbReference type="HOGENOM" id="CLU_037404_0_1_9"/>
<dbReference type="BioCyc" id="LGAS324831:G1G6Y-1200-MONOMER"/>
<dbReference type="UniPathway" id="UPA00219"/>
<dbReference type="Proteomes" id="UP000000664">
    <property type="component" value="Chromosome"/>
</dbReference>
<dbReference type="GO" id="GO:0005886">
    <property type="term" value="C:plasma membrane"/>
    <property type="evidence" value="ECO:0007669"/>
    <property type="project" value="UniProtKB-SubCell"/>
</dbReference>
<dbReference type="GO" id="GO:0050511">
    <property type="term" value="F:undecaprenyldiphospho-muramoylpentapeptide beta-N-acetylglucosaminyltransferase activity"/>
    <property type="evidence" value="ECO:0007669"/>
    <property type="project" value="UniProtKB-UniRule"/>
</dbReference>
<dbReference type="GO" id="GO:0005975">
    <property type="term" value="P:carbohydrate metabolic process"/>
    <property type="evidence" value="ECO:0007669"/>
    <property type="project" value="InterPro"/>
</dbReference>
<dbReference type="GO" id="GO:0051301">
    <property type="term" value="P:cell division"/>
    <property type="evidence" value="ECO:0007669"/>
    <property type="project" value="UniProtKB-KW"/>
</dbReference>
<dbReference type="GO" id="GO:0071555">
    <property type="term" value="P:cell wall organization"/>
    <property type="evidence" value="ECO:0007669"/>
    <property type="project" value="UniProtKB-KW"/>
</dbReference>
<dbReference type="GO" id="GO:0030259">
    <property type="term" value="P:lipid glycosylation"/>
    <property type="evidence" value="ECO:0007669"/>
    <property type="project" value="UniProtKB-UniRule"/>
</dbReference>
<dbReference type="GO" id="GO:0009252">
    <property type="term" value="P:peptidoglycan biosynthetic process"/>
    <property type="evidence" value="ECO:0007669"/>
    <property type="project" value="UniProtKB-UniRule"/>
</dbReference>
<dbReference type="GO" id="GO:0008360">
    <property type="term" value="P:regulation of cell shape"/>
    <property type="evidence" value="ECO:0007669"/>
    <property type="project" value="UniProtKB-KW"/>
</dbReference>
<dbReference type="CDD" id="cd03785">
    <property type="entry name" value="GT28_MurG"/>
    <property type="match status" value="1"/>
</dbReference>
<dbReference type="Gene3D" id="3.40.50.2000">
    <property type="entry name" value="Glycogen Phosphorylase B"/>
    <property type="match status" value="2"/>
</dbReference>
<dbReference type="HAMAP" id="MF_00033">
    <property type="entry name" value="MurG"/>
    <property type="match status" value="1"/>
</dbReference>
<dbReference type="InterPro" id="IPR006009">
    <property type="entry name" value="GlcNAc_MurG"/>
</dbReference>
<dbReference type="InterPro" id="IPR007235">
    <property type="entry name" value="Glyco_trans_28_C"/>
</dbReference>
<dbReference type="InterPro" id="IPR004276">
    <property type="entry name" value="GlycoTrans_28_N"/>
</dbReference>
<dbReference type="NCBIfam" id="TIGR01133">
    <property type="entry name" value="murG"/>
    <property type="match status" value="1"/>
</dbReference>
<dbReference type="PANTHER" id="PTHR21015:SF22">
    <property type="entry name" value="GLYCOSYLTRANSFERASE"/>
    <property type="match status" value="1"/>
</dbReference>
<dbReference type="PANTHER" id="PTHR21015">
    <property type="entry name" value="UDP-N-ACETYLGLUCOSAMINE--N-ACETYLMURAMYL-(PENTAPEPTIDE) PYROPHOSPHORYL-UNDECAPRENOL N-ACETYLGLUCOSAMINE TRANSFERASE 1"/>
    <property type="match status" value="1"/>
</dbReference>
<dbReference type="Pfam" id="PF04101">
    <property type="entry name" value="Glyco_tran_28_C"/>
    <property type="match status" value="1"/>
</dbReference>
<dbReference type="Pfam" id="PF03033">
    <property type="entry name" value="Glyco_transf_28"/>
    <property type="match status" value="1"/>
</dbReference>
<dbReference type="SUPFAM" id="SSF53756">
    <property type="entry name" value="UDP-Glycosyltransferase/glycogen phosphorylase"/>
    <property type="match status" value="1"/>
</dbReference>
<name>MURG_LACGA</name>
<keyword id="KW-0131">Cell cycle</keyword>
<keyword id="KW-0132">Cell division</keyword>
<keyword id="KW-1003">Cell membrane</keyword>
<keyword id="KW-0133">Cell shape</keyword>
<keyword id="KW-0961">Cell wall biogenesis/degradation</keyword>
<keyword id="KW-0328">Glycosyltransferase</keyword>
<keyword id="KW-0472">Membrane</keyword>
<keyword id="KW-0573">Peptidoglycan synthesis</keyword>
<keyword id="KW-0808">Transferase</keyword>